<proteinExistence type="evidence at transcript level"/>
<feature type="chain" id="PRO_0000084048" description="BLOC-3 complex member HPS1">
    <location>
        <begin position="1"/>
        <end position="667"/>
    </location>
</feature>
<feature type="repeat" description="[DE]-X(4)-L-L 1">
    <location>
        <begin position="45"/>
        <end position="51"/>
    </location>
</feature>
<feature type="repeat" description="[DE]-X(4)-L-L 2">
    <location>
        <begin position="147"/>
        <end position="153"/>
    </location>
</feature>
<feature type="repeat" description="[DE]-X(4)-L-L 3">
    <location>
        <begin position="483"/>
        <end position="489"/>
    </location>
</feature>
<feature type="repeat" description="[DE]-X(4)-L-L 4">
    <location>
        <begin position="611"/>
        <end position="617"/>
    </location>
</feature>
<feature type="short sequence motif" description="Melanosome targeting signal" evidence="2">
    <location>
        <begin position="665"/>
        <end position="667"/>
    </location>
</feature>
<evidence type="ECO:0000250" key="1">
    <source>
        <dbReference type="UniProtKB" id="Q92902"/>
    </source>
</evidence>
<evidence type="ECO:0000255" key="2"/>
<evidence type="ECO:0000305" key="3"/>
<dbReference type="EMBL" id="AB125174">
    <property type="protein sequence ID" value="BAD51962.1"/>
    <property type="molecule type" value="mRNA"/>
</dbReference>
<dbReference type="STRING" id="9541.ENSMFAP00000000371"/>
<dbReference type="eggNOG" id="ENOG502QW8U">
    <property type="taxonomic scope" value="Eukaryota"/>
</dbReference>
<dbReference type="Proteomes" id="UP000233100">
    <property type="component" value="Unplaced"/>
</dbReference>
<dbReference type="GO" id="GO:0031085">
    <property type="term" value="C:BLOC-3 complex"/>
    <property type="evidence" value="ECO:0000250"/>
    <property type="project" value="UniProtKB"/>
</dbReference>
<dbReference type="GO" id="GO:0005085">
    <property type="term" value="F:guanyl-nucleotide exchange factor activity"/>
    <property type="evidence" value="ECO:0007669"/>
    <property type="project" value="UniProtKB-KW"/>
</dbReference>
<dbReference type="GO" id="GO:1903232">
    <property type="term" value="P:melanosome assembly"/>
    <property type="evidence" value="ECO:0000250"/>
    <property type="project" value="UniProtKB"/>
</dbReference>
<dbReference type="GO" id="GO:0016192">
    <property type="term" value="P:vesicle-mediated transport"/>
    <property type="evidence" value="ECO:0007669"/>
    <property type="project" value="InterPro"/>
</dbReference>
<dbReference type="InterPro" id="IPR043972">
    <property type="entry name" value="FUZ/MON1/HPS1_longin_1"/>
</dbReference>
<dbReference type="InterPro" id="IPR043971">
    <property type="entry name" value="FUZ/MON1/HPS1_longin_2"/>
</dbReference>
<dbReference type="InterPro" id="IPR043970">
    <property type="entry name" value="FUZ/MON1/HPS1_longin_3"/>
</dbReference>
<dbReference type="InterPro" id="IPR026053">
    <property type="entry name" value="HPS1"/>
</dbReference>
<dbReference type="PANTHER" id="PTHR12761:SF1">
    <property type="entry name" value="BLOC-3 COMPLEX MEMBER HPS1"/>
    <property type="match status" value="1"/>
</dbReference>
<dbReference type="PANTHER" id="PTHR12761">
    <property type="entry name" value="HERMANSKY-PUDLAK SYNDROME PROTEIN 1"/>
    <property type="match status" value="1"/>
</dbReference>
<dbReference type="Pfam" id="PF19036">
    <property type="entry name" value="Fuz_longin_1"/>
    <property type="match status" value="1"/>
</dbReference>
<dbReference type="Pfam" id="PF19037">
    <property type="entry name" value="Fuz_longin_2"/>
    <property type="match status" value="1"/>
</dbReference>
<dbReference type="Pfam" id="PF19038">
    <property type="entry name" value="Fuz_longin_3"/>
    <property type="match status" value="1"/>
</dbReference>
<gene>
    <name type="primary">HPS1</name>
    <name type="ORF">QflA-21346</name>
</gene>
<protein>
    <recommendedName>
        <fullName evidence="3">BLOC-3 complex member HPS1</fullName>
    </recommendedName>
    <alternativeName>
        <fullName>Hermansky-Pudlak syndrome 1 protein homolog</fullName>
    </alternativeName>
</protein>
<name>HPS1_MACFA</name>
<sequence>MKCVLVATEGAEVLFYWTDDEFEESLRLKFGQSENEEEELPALEDQLSTLLAPVIISSMTMLEKLSDTYTCFSTENGNSLYVLHLFGECLFIAINGDHTENEGDLRRKLYVLKYLFEVHFGLVTVDGQLIRKELRPPDLGQRVQLWEHFQSLLWTYSRLREQEQCFAVEALERLIHPQLCELCIEALERHVIQAVNTSSERGGEEALHAFLLVHSKLLAFYSSHSASSLRPADLLVLILLVQDLYPSENTVEDDTQETDSFSLPEEYFTPAPSPGDQSSGSTIWLEGGTPPMEALQIAEDTLQTLVPHCPAPSSPRRIFLDANVKESYCPLVPHTMYCLPLWPGINLVLLTRSPSAPLALVLSQLMDGFAMLEKKLKEGPEAGASLRSQPLVGDLRQRMDKFVKNRGAQEIQSTWLEFKAKAFSKSEPGSSSELLQACGKLKRQLCAIYRLNFLTTAPNRGGPHLPQHLQDQVQRLMREKLTDWKDFLLVKSRRNITMVSYLEDFPGLVHFIYVDRTTGQMVAPSLNCSEKTSSELGKGPLAAFVKTKVWSLIQLARRYLQKGYTTLLFQEGDFYCSYFLWFENDMGYKLQMIEVPVLSDDSVPIGMLGGDYYRKLLRYYSKNRPAEAVRCYELLALHLSVIPTDLLVQQAGQLARRLWEASRIPLL</sequence>
<organism>
    <name type="scientific">Macaca fascicularis</name>
    <name type="common">Crab-eating macaque</name>
    <name type="synonym">Cynomolgus monkey</name>
    <dbReference type="NCBI Taxonomy" id="9541"/>
    <lineage>
        <taxon>Eukaryota</taxon>
        <taxon>Metazoa</taxon>
        <taxon>Chordata</taxon>
        <taxon>Craniata</taxon>
        <taxon>Vertebrata</taxon>
        <taxon>Euteleostomi</taxon>
        <taxon>Mammalia</taxon>
        <taxon>Eutheria</taxon>
        <taxon>Euarchontoglires</taxon>
        <taxon>Primates</taxon>
        <taxon>Haplorrhini</taxon>
        <taxon>Catarrhini</taxon>
        <taxon>Cercopithecidae</taxon>
        <taxon>Cercopithecinae</taxon>
        <taxon>Macaca</taxon>
    </lineage>
</organism>
<comment type="function">
    <text evidence="1">Component of the BLOC-3 complex, a complex that acts as a guanine exchange factor (GEF) for RAB32 and RAB38, promotes the exchange of GDP to GTP, converting them from an inactive GDP-bound form into an active GTP-bound form. The BLOC-3 complex plays an important role in the control of melanin production and melanosome biogenesis and promotes the membrane localization of RAB32 and RAB38.</text>
</comment>
<comment type="subunit">
    <text evidence="1">Component of the biogenesis of lysosome-related organelles complex-3 (or BLOC-3), a heterodimer of HPS1 and HPS4. HPS1 cannot but BLOC-3 complex (heterodimer of HPS1 and HPS4) can interact with the GTP-bound form of RAB9A and RAB9B. HPS1 and BLOC-3 complex do not interact with the GDP-bound form of RAB9A and RAB9B.</text>
</comment>
<keyword id="KW-0344">Guanine-nucleotide releasing factor</keyword>
<keyword id="KW-1185">Reference proteome</keyword>
<keyword id="KW-0677">Repeat</keyword>
<reference key="1">
    <citation type="submission" date="2003-10" db="EMBL/GenBank/DDBJ databases">
        <title>Isolation and characterization of cDNA for macaque neurological disease genes.</title>
        <authorList>
            <person name="Kusuda J."/>
            <person name="Osada N."/>
            <person name="Tanuma R."/>
            <person name="Hirata M."/>
            <person name="Sugano S."/>
            <person name="Hashimoto K."/>
        </authorList>
    </citation>
    <scope>NUCLEOTIDE SEQUENCE [LARGE SCALE MRNA]</scope>
    <source>
        <tissue>Frontal cortex</tissue>
    </source>
</reference>
<accession>Q60HF3</accession>